<keyword id="KW-1003">Cell membrane</keyword>
<keyword id="KW-1015">Disulfide bond</keyword>
<keyword id="KW-0297">G-protein coupled receptor</keyword>
<keyword id="KW-0325">Glycoprotein</keyword>
<keyword id="KW-0472">Membrane</keyword>
<keyword id="KW-0552">Olfaction</keyword>
<keyword id="KW-0675">Receptor</keyword>
<keyword id="KW-1185">Reference proteome</keyword>
<keyword id="KW-0716">Sensory transduction</keyword>
<keyword id="KW-0807">Transducer</keyword>
<keyword id="KW-0812">Transmembrane</keyword>
<keyword id="KW-1133">Transmembrane helix</keyword>
<evidence type="ECO:0000255" key="1"/>
<evidence type="ECO:0000255" key="2">
    <source>
        <dbReference type="PROSITE-ProRule" id="PRU00521"/>
    </source>
</evidence>
<evidence type="ECO:0000305" key="3"/>
<feature type="chain" id="PRO_0000150430" description="Olfactory receptor 1E5">
    <location>
        <begin position="1"/>
        <end position="314"/>
    </location>
</feature>
<feature type="topological domain" description="Extracellular" evidence="1">
    <location>
        <begin position="1"/>
        <end position="25"/>
    </location>
</feature>
<feature type="transmembrane region" description="Helical; Name=1" evidence="1">
    <location>
        <begin position="26"/>
        <end position="49"/>
    </location>
</feature>
<feature type="topological domain" description="Cytoplasmic" evidence="1">
    <location>
        <begin position="50"/>
        <end position="57"/>
    </location>
</feature>
<feature type="transmembrane region" description="Helical; Name=2" evidence="1">
    <location>
        <begin position="58"/>
        <end position="79"/>
    </location>
</feature>
<feature type="topological domain" description="Extracellular" evidence="1">
    <location>
        <begin position="80"/>
        <end position="100"/>
    </location>
</feature>
<feature type="transmembrane region" description="Helical; Name=3" evidence="1">
    <location>
        <begin position="101"/>
        <end position="120"/>
    </location>
</feature>
<feature type="topological domain" description="Cytoplasmic" evidence="1">
    <location>
        <begin position="121"/>
        <end position="139"/>
    </location>
</feature>
<feature type="transmembrane region" description="Helical; Name=4" evidence="1">
    <location>
        <begin position="140"/>
        <end position="158"/>
    </location>
</feature>
<feature type="topological domain" description="Extracellular" evidence="1">
    <location>
        <begin position="159"/>
        <end position="196"/>
    </location>
</feature>
<feature type="transmembrane region" description="Helical; Name=5" evidence="1">
    <location>
        <begin position="197"/>
        <end position="219"/>
    </location>
</feature>
<feature type="topological domain" description="Cytoplasmic" evidence="1">
    <location>
        <begin position="220"/>
        <end position="236"/>
    </location>
</feature>
<feature type="transmembrane region" description="Helical; Name=6" evidence="1">
    <location>
        <begin position="237"/>
        <end position="260"/>
    </location>
</feature>
<feature type="topological domain" description="Extracellular" evidence="1">
    <location>
        <begin position="261"/>
        <end position="272"/>
    </location>
</feature>
<feature type="transmembrane region" description="Helical; Name=7" evidence="1">
    <location>
        <begin position="273"/>
        <end position="292"/>
    </location>
</feature>
<feature type="topological domain" description="Cytoplasmic" evidence="1">
    <location>
        <begin position="293"/>
        <end position="314"/>
    </location>
</feature>
<feature type="glycosylation site" description="N-linked (GlcNAc...) asparagine" evidence="1">
    <location>
        <position position="5"/>
    </location>
</feature>
<feature type="glycosylation site" description="N-linked (GlcNAc...) asparagine" evidence="1">
    <location>
        <position position="265"/>
    </location>
</feature>
<feature type="disulfide bond" evidence="2">
    <location>
        <begin position="97"/>
        <end position="189"/>
    </location>
</feature>
<reference key="1">
    <citation type="journal article" date="1999" name="Genomics">
        <title>Primate evolution of an olfactory receptor cluster: diversification by gene conversion and recent emergence of pseudogenes.</title>
        <authorList>
            <person name="Sharon D."/>
            <person name="Glusman G."/>
            <person name="Pilpel Y."/>
            <person name="Khen M."/>
            <person name="Gruetzner F."/>
            <person name="Haaf T."/>
            <person name="Lancet D."/>
        </authorList>
    </citation>
    <scope>NUCLEOTIDE SEQUENCE [GENOMIC DNA]</scope>
</reference>
<name>OR1E5_PANTR</name>
<gene>
    <name type="primary">OR1E5</name>
</gene>
<dbReference type="EMBL" id="AF101741">
    <property type="protein sequence ID" value="AAF03323.1"/>
    <property type="molecule type" value="Genomic_DNA"/>
</dbReference>
<dbReference type="RefSeq" id="NP_001009164.1">
    <property type="nucleotide sequence ID" value="NM_001009164.1"/>
</dbReference>
<dbReference type="FunCoup" id="Q9TUA1">
    <property type="interactions" value="328"/>
</dbReference>
<dbReference type="GlyCosmos" id="Q9TUA1">
    <property type="glycosylation" value="2 sites, No reported glycans"/>
</dbReference>
<dbReference type="GeneID" id="494123"/>
<dbReference type="CTD" id="494123"/>
<dbReference type="InParanoid" id="Q9TUA1"/>
<dbReference type="Proteomes" id="UP000002277">
    <property type="component" value="Unplaced"/>
</dbReference>
<dbReference type="GO" id="GO:0005886">
    <property type="term" value="C:plasma membrane"/>
    <property type="evidence" value="ECO:0000318"/>
    <property type="project" value="GO_Central"/>
</dbReference>
<dbReference type="GO" id="GO:0004930">
    <property type="term" value="F:G protein-coupled receptor activity"/>
    <property type="evidence" value="ECO:0007669"/>
    <property type="project" value="UniProtKB-KW"/>
</dbReference>
<dbReference type="GO" id="GO:0004984">
    <property type="term" value="F:olfactory receptor activity"/>
    <property type="evidence" value="ECO:0000318"/>
    <property type="project" value="GO_Central"/>
</dbReference>
<dbReference type="GO" id="GO:0007165">
    <property type="term" value="P:signal transduction"/>
    <property type="evidence" value="ECO:0000318"/>
    <property type="project" value="GO_Central"/>
</dbReference>
<dbReference type="CDD" id="cd15236">
    <property type="entry name" value="7tmA_OR1E-like"/>
    <property type="match status" value="1"/>
</dbReference>
<dbReference type="FunFam" id="1.20.1070.10:FF:000009">
    <property type="entry name" value="Olfactory receptor"/>
    <property type="match status" value="1"/>
</dbReference>
<dbReference type="Gene3D" id="1.20.1070.10">
    <property type="entry name" value="Rhodopsin 7-helix transmembrane proteins"/>
    <property type="match status" value="1"/>
</dbReference>
<dbReference type="InterPro" id="IPR000276">
    <property type="entry name" value="GPCR_Rhodpsn"/>
</dbReference>
<dbReference type="InterPro" id="IPR017452">
    <property type="entry name" value="GPCR_Rhodpsn_7TM"/>
</dbReference>
<dbReference type="InterPro" id="IPR000725">
    <property type="entry name" value="Olfact_rcpt"/>
</dbReference>
<dbReference type="PANTHER" id="PTHR48001">
    <property type="entry name" value="OLFACTORY RECEPTOR"/>
    <property type="match status" value="1"/>
</dbReference>
<dbReference type="Pfam" id="PF13853">
    <property type="entry name" value="7tm_4"/>
    <property type="match status" value="1"/>
</dbReference>
<dbReference type="PRINTS" id="PR00237">
    <property type="entry name" value="GPCRRHODOPSN"/>
</dbReference>
<dbReference type="PRINTS" id="PR00245">
    <property type="entry name" value="OLFACTORYR"/>
</dbReference>
<dbReference type="SUPFAM" id="SSF81321">
    <property type="entry name" value="Family A G protein-coupled receptor-like"/>
    <property type="match status" value="1"/>
</dbReference>
<dbReference type="PROSITE" id="PS00237">
    <property type="entry name" value="G_PROTEIN_RECEP_F1_1"/>
    <property type="match status" value="1"/>
</dbReference>
<dbReference type="PROSITE" id="PS50262">
    <property type="entry name" value="G_PROTEIN_RECEP_F1_2"/>
    <property type="match status" value="1"/>
</dbReference>
<comment type="function">
    <text evidence="3">Odorant receptor.</text>
</comment>
<comment type="subcellular location">
    <subcellularLocation>
        <location>Cell membrane</location>
        <topology>Multi-pass membrane protein</topology>
    </subcellularLocation>
</comment>
<comment type="similarity">
    <text evidence="2">Belongs to the G-protein coupled receptor 1 family.</text>
</comment>
<accession>Q9TUA1</accession>
<organism>
    <name type="scientific">Pan troglodytes</name>
    <name type="common">Chimpanzee</name>
    <dbReference type="NCBI Taxonomy" id="9598"/>
    <lineage>
        <taxon>Eukaryota</taxon>
        <taxon>Metazoa</taxon>
        <taxon>Chordata</taxon>
        <taxon>Craniata</taxon>
        <taxon>Vertebrata</taxon>
        <taxon>Euteleostomi</taxon>
        <taxon>Mammalia</taxon>
        <taxon>Eutheria</taxon>
        <taxon>Euarchontoglires</taxon>
        <taxon>Primates</taxon>
        <taxon>Haplorrhini</taxon>
        <taxon>Catarrhini</taxon>
        <taxon>Hominidae</taxon>
        <taxon>Pan</taxon>
    </lineage>
</organism>
<protein>
    <recommendedName>
        <fullName>Olfactory receptor 1E5</fullName>
    </recommendedName>
</protein>
<proteinExistence type="inferred from homology"/>
<sequence>MMGQNQTSISDFLLLGLPIQPEQQNLCYALFLAMYLTTLLGNLLIIVLIRLDSHLHTPMYLFLSNLSFSDLCFSSVTIPKLLQNMQNQDPSIPYADCLTQMYFFLLFGDLESFLLVAMAYDRYVAICFPLHYTAIMSPMLCLSLVALSWVLTTFHAMLHTLLMARLCFCADNVIPHFFCDMSALLKLACSDTRVNEWVIFIMGGLIVVIPFLLILGSYARIVSSILKVPSSKGICKAFSTCGSHLSVVSLFYGTIIGLYLCPSANSSTLKETVMAMMYTVVTPMLNPFIYSLRNRDMKGALERVIXKRKNPFLL</sequence>